<evidence type="ECO:0000255" key="1">
    <source>
        <dbReference type="HAMAP-Rule" id="MF_00083"/>
    </source>
</evidence>
<sequence length="193" mass="21206">MDTIVIAGLGNPGSKYQWTRHNAGFLFLDRIAQLEGLSIVRKQFGGLTAEWERKGKRLVLLKPQTFMNLSGRSVMPALQFYKLKPDQLIVVHDEIDLALGAARLKQGGGHGGQNGLRSIMELLGKGDFVRLRLGIGRPPHGDVTNHVLGVFTPPEMEIFARVLDGALDMLETALDEGVPKAMSLFNNKSYLEG</sequence>
<proteinExistence type="inferred from homology"/>
<reference key="1">
    <citation type="submission" date="2008-05" db="EMBL/GenBank/DDBJ databases">
        <title>Complete sequence of chromosome of Geobacter lovleyi SZ.</title>
        <authorList>
            <consortium name="US DOE Joint Genome Institute"/>
            <person name="Lucas S."/>
            <person name="Copeland A."/>
            <person name="Lapidus A."/>
            <person name="Glavina del Rio T."/>
            <person name="Dalin E."/>
            <person name="Tice H."/>
            <person name="Bruce D."/>
            <person name="Goodwin L."/>
            <person name="Pitluck S."/>
            <person name="Chertkov O."/>
            <person name="Meincke L."/>
            <person name="Brettin T."/>
            <person name="Detter J.C."/>
            <person name="Han C."/>
            <person name="Tapia R."/>
            <person name="Kuske C.R."/>
            <person name="Schmutz J."/>
            <person name="Larimer F."/>
            <person name="Land M."/>
            <person name="Hauser L."/>
            <person name="Kyrpides N."/>
            <person name="Mikhailova N."/>
            <person name="Sung Y."/>
            <person name="Fletcher K.E."/>
            <person name="Ritalahti K.M."/>
            <person name="Loeffler F.E."/>
            <person name="Richardson P."/>
        </authorList>
    </citation>
    <scope>NUCLEOTIDE SEQUENCE [LARGE SCALE GENOMIC DNA]</scope>
    <source>
        <strain>ATCC BAA-1151 / DSM 17278 / SZ</strain>
    </source>
</reference>
<keyword id="KW-0963">Cytoplasm</keyword>
<keyword id="KW-0378">Hydrolase</keyword>
<keyword id="KW-1185">Reference proteome</keyword>
<keyword id="KW-0694">RNA-binding</keyword>
<keyword id="KW-0820">tRNA-binding</keyword>
<accession>B3E6F9</accession>
<feature type="chain" id="PRO_1000092945" description="Peptidyl-tRNA hydrolase">
    <location>
        <begin position="1"/>
        <end position="193"/>
    </location>
</feature>
<feature type="active site" description="Proton acceptor" evidence="1">
    <location>
        <position position="21"/>
    </location>
</feature>
<feature type="binding site" evidence="1">
    <location>
        <position position="16"/>
    </location>
    <ligand>
        <name>tRNA</name>
        <dbReference type="ChEBI" id="CHEBI:17843"/>
    </ligand>
</feature>
<feature type="binding site" evidence="1">
    <location>
        <position position="66"/>
    </location>
    <ligand>
        <name>tRNA</name>
        <dbReference type="ChEBI" id="CHEBI:17843"/>
    </ligand>
</feature>
<feature type="binding site" evidence="1">
    <location>
        <position position="68"/>
    </location>
    <ligand>
        <name>tRNA</name>
        <dbReference type="ChEBI" id="CHEBI:17843"/>
    </ligand>
</feature>
<feature type="binding site" evidence="1">
    <location>
        <position position="114"/>
    </location>
    <ligand>
        <name>tRNA</name>
        <dbReference type="ChEBI" id="CHEBI:17843"/>
    </ligand>
</feature>
<feature type="site" description="Discriminates between blocked and unblocked aminoacyl-tRNA" evidence="1">
    <location>
        <position position="11"/>
    </location>
</feature>
<feature type="site" description="Stabilizes the basic form of H active site to accept a proton" evidence="1">
    <location>
        <position position="93"/>
    </location>
</feature>
<dbReference type="EC" id="3.1.1.29" evidence="1"/>
<dbReference type="EMBL" id="CP001089">
    <property type="protein sequence ID" value="ACD96306.1"/>
    <property type="molecule type" value="Genomic_DNA"/>
</dbReference>
<dbReference type="RefSeq" id="WP_012470638.1">
    <property type="nucleotide sequence ID" value="NC_010814.1"/>
</dbReference>
<dbReference type="SMR" id="B3E6F9"/>
<dbReference type="STRING" id="398767.Glov_2593"/>
<dbReference type="KEGG" id="glo:Glov_2593"/>
<dbReference type="eggNOG" id="COG0193">
    <property type="taxonomic scope" value="Bacteria"/>
</dbReference>
<dbReference type="HOGENOM" id="CLU_062456_4_1_7"/>
<dbReference type="OrthoDB" id="9800507at2"/>
<dbReference type="Proteomes" id="UP000002420">
    <property type="component" value="Chromosome"/>
</dbReference>
<dbReference type="GO" id="GO:0005737">
    <property type="term" value="C:cytoplasm"/>
    <property type="evidence" value="ECO:0007669"/>
    <property type="project" value="UniProtKB-SubCell"/>
</dbReference>
<dbReference type="GO" id="GO:0004045">
    <property type="term" value="F:peptidyl-tRNA hydrolase activity"/>
    <property type="evidence" value="ECO:0007669"/>
    <property type="project" value="UniProtKB-UniRule"/>
</dbReference>
<dbReference type="GO" id="GO:0000049">
    <property type="term" value="F:tRNA binding"/>
    <property type="evidence" value="ECO:0007669"/>
    <property type="project" value="UniProtKB-UniRule"/>
</dbReference>
<dbReference type="GO" id="GO:0006515">
    <property type="term" value="P:protein quality control for misfolded or incompletely synthesized proteins"/>
    <property type="evidence" value="ECO:0007669"/>
    <property type="project" value="UniProtKB-UniRule"/>
</dbReference>
<dbReference type="GO" id="GO:0072344">
    <property type="term" value="P:rescue of stalled ribosome"/>
    <property type="evidence" value="ECO:0007669"/>
    <property type="project" value="UniProtKB-UniRule"/>
</dbReference>
<dbReference type="CDD" id="cd00462">
    <property type="entry name" value="PTH"/>
    <property type="match status" value="1"/>
</dbReference>
<dbReference type="FunFam" id="3.40.50.1470:FF:000001">
    <property type="entry name" value="Peptidyl-tRNA hydrolase"/>
    <property type="match status" value="1"/>
</dbReference>
<dbReference type="Gene3D" id="3.40.50.1470">
    <property type="entry name" value="Peptidyl-tRNA hydrolase"/>
    <property type="match status" value="1"/>
</dbReference>
<dbReference type="HAMAP" id="MF_00083">
    <property type="entry name" value="Pept_tRNA_hydro_bact"/>
    <property type="match status" value="1"/>
</dbReference>
<dbReference type="InterPro" id="IPR001328">
    <property type="entry name" value="Pept_tRNA_hydro"/>
</dbReference>
<dbReference type="InterPro" id="IPR018171">
    <property type="entry name" value="Pept_tRNA_hydro_CS"/>
</dbReference>
<dbReference type="InterPro" id="IPR036416">
    <property type="entry name" value="Pept_tRNA_hydro_sf"/>
</dbReference>
<dbReference type="NCBIfam" id="TIGR00447">
    <property type="entry name" value="pth"/>
    <property type="match status" value="1"/>
</dbReference>
<dbReference type="PANTHER" id="PTHR17224">
    <property type="entry name" value="PEPTIDYL-TRNA HYDROLASE"/>
    <property type="match status" value="1"/>
</dbReference>
<dbReference type="PANTHER" id="PTHR17224:SF1">
    <property type="entry name" value="PEPTIDYL-TRNA HYDROLASE"/>
    <property type="match status" value="1"/>
</dbReference>
<dbReference type="Pfam" id="PF01195">
    <property type="entry name" value="Pept_tRNA_hydro"/>
    <property type="match status" value="1"/>
</dbReference>
<dbReference type="SUPFAM" id="SSF53178">
    <property type="entry name" value="Peptidyl-tRNA hydrolase-like"/>
    <property type="match status" value="1"/>
</dbReference>
<dbReference type="PROSITE" id="PS01195">
    <property type="entry name" value="PEPT_TRNA_HYDROL_1"/>
    <property type="match status" value="1"/>
</dbReference>
<comment type="function">
    <text evidence="1">Hydrolyzes ribosome-free peptidyl-tRNAs (with 1 or more amino acids incorporated), which drop off the ribosome during protein synthesis, or as a result of ribosome stalling.</text>
</comment>
<comment type="function">
    <text evidence="1">Catalyzes the release of premature peptidyl moieties from peptidyl-tRNA molecules trapped in stalled 50S ribosomal subunits, and thus maintains levels of free tRNAs and 50S ribosomes.</text>
</comment>
<comment type="catalytic activity">
    <reaction evidence="1">
        <text>an N-acyl-L-alpha-aminoacyl-tRNA + H2O = an N-acyl-L-amino acid + a tRNA + H(+)</text>
        <dbReference type="Rhea" id="RHEA:54448"/>
        <dbReference type="Rhea" id="RHEA-COMP:10123"/>
        <dbReference type="Rhea" id="RHEA-COMP:13883"/>
        <dbReference type="ChEBI" id="CHEBI:15377"/>
        <dbReference type="ChEBI" id="CHEBI:15378"/>
        <dbReference type="ChEBI" id="CHEBI:59874"/>
        <dbReference type="ChEBI" id="CHEBI:78442"/>
        <dbReference type="ChEBI" id="CHEBI:138191"/>
        <dbReference type="EC" id="3.1.1.29"/>
    </reaction>
</comment>
<comment type="subunit">
    <text evidence="1">Monomer.</text>
</comment>
<comment type="subcellular location">
    <subcellularLocation>
        <location evidence="1">Cytoplasm</location>
    </subcellularLocation>
</comment>
<comment type="similarity">
    <text evidence="1">Belongs to the PTH family.</text>
</comment>
<organism>
    <name type="scientific">Trichlorobacter lovleyi (strain ATCC BAA-1151 / DSM 17278 / SZ)</name>
    <name type="common">Geobacter lovleyi</name>
    <dbReference type="NCBI Taxonomy" id="398767"/>
    <lineage>
        <taxon>Bacteria</taxon>
        <taxon>Pseudomonadati</taxon>
        <taxon>Thermodesulfobacteriota</taxon>
        <taxon>Desulfuromonadia</taxon>
        <taxon>Geobacterales</taxon>
        <taxon>Geobacteraceae</taxon>
        <taxon>Trichlorobacter</taxon>
    </lineage>
</organism>
<gene>
    <name evidence="1" type="primary">pth</name>
    <name type="ordered locus">Glov_2593</name>
</gene>
<protein>
    <recommendedName>
        <fullName evidence="1">Peptidyl-tRNA hydrolase</fullName>
        <shortName evidence="1">Pth</shortName>
        <ecNumber evidence="1">3.1.1.29</ecNumber>
    </recommendedName>
</protein>
<name>PTH_TRIL1</name>